<protein>
    <recommendedName>
        <fullName evidence="2">Alanine--tRNA ligase, mitochondrial</fullName>
        <ecNumber evidence="2">6.1.1.7</ecNumber>
    </recommendedName>
    <alternativeName>
        <fullName evidence="2">Alanyl-tRNA synthetase</fullName>
        <shortName evidence="2">AlaRS</shortName>
    </alternativeName>
    <alternativeName>
        <fullName evidence="9">Protein lactyltransferase AARS2</fullName>
        <ecNumber evidence="8">6.-.-.-</ecNumber>
    </alternativeName>
</protein>
<proteinExistence type="evidence at protein level"/>
<sequence length="985" mass="107340">MAASVAAAARRLRRAIRRSPAWRGLSHRPLSSEPPAAKASAVRAAFLNFFRDRHGHRLVPSASVRPRGDPSLLFVNAGMNQFKPIFLGTVDPRSEMAGFRRVANSQKCVRAGGHHNDLEDVGRDLSHHTFFEMLGNWAFGGEYFKEEACNMAWELLTQVYGIPEERLWISYFDGDPKAGLDPDLETRDIWLSLGVPASRVLSFGPQENFWEMGDTGPCGPCTEIHYDLAGGVGAPQLVELWNLVFMQHNREADGSLQPLPQRHVDTGMGLERLVAVLQGKHSTYDTDLFSPLLNAIQQGCRAPPYLGRVGVADEGRTDTAYRVVADHIRTLSVCISDGIFPGMSGPPLVLRRILRRAVRFSMEILKAPPGFLGSLVPVVVETLGDAYPELQRNSAQIANLVSEDEAAFLASLERGRRIIDRTLRTLGPSDMFPAEVAWSLSLCGDLGLPLDMVELMLEEKGVQLDSAGLERLAQEEAQHRARQAEPVQKQGLWLDVHALGELQRQGVPPTDDSPKYNYSLRPSGSYEFGTCEAQVLQLYTEDGTAVASVGKGQRCGLLLDRTNFYAEQGGQASDRGYLVRAGQEDVLFPVARAQVCGGFILHEAVAPECLRLGDQVQLHVDEAWRLGCMAKHTATHLLNWALRQTLGPGTEQQGSHLNPEQLRLDVTTQTPLTPEQLRAVENTVQEAVGQDEAVYMEEVPLALTAQVPGLRSLDEVYPDPVRVVSVGVPVAHALDPASQAALQTSVELCCGTHLLRTGAVGDLVIIGDRQLSKGTTRLLAVTGEQAQQARELGQSLAQEVKAATERLSLGSRDVAEALRLSKDIGRLIEAVETAVMPQWQRRELLATVKMLQRRANTAIRKLQMGQAAKKTQELLERHSKGPLIVDTVSAESLSVLVKVVRQLCEQAPSTSVLLLSPQPMGKVLCACQVAQGAMPTFTAEAWALAVCSHMGGKAWGSRVVAQGTGSTTDLEAALSIAQTYALSQL</sequence>
<dbReference type="EC" id="6.1.1.7" evidence="2"/>
<dbReference type="EC" id="6.-.-.-" evidence="8"/>
<dbReference type="EMBL" id="AB033096">
    <property type="protein sequence ID" value="BAA86584.1"/>
    <property type="status" value="ALT_INIT"/>
    <property type="molecule type" value="mRNA"/>
</dbReference>
<dbReference type="EMBL" id="AL353588">
    <property type="status" value="NOT_ANNOTATED_CDS"/>
    <property type="molecule type" value="Genomic_DNA"/>
</dbReference>
<dbReference type="EMBL" id="BC013593">
    <property type="protein sequence ID" value="AAH13593.1"/>
    <property type="molecule type" value="mRNA"/>
</dbReference>
<dbReference type="EMBL" id="BC033169">
    <property type="protein sequence ID" value="AAH33169.1"/>
    <property type="molecule type" value="mRNA"/>
</dbReference>
<dbReference type="EMBL" id="BC131728">
    <property type="protein sequence ID" value="AAI31729.1"/>
    <property type="molecule type" value="mRNA"/>
</dbReference>
<dbReference type="CCDS" id="CCDS34464.1"/>
<dbReference type="RefSeq" id="NP_065796.2">
    <property type="nucleotide sequence ID" value="NM_020745.4"/>
</dbReference>
<dbReference type="PDB" id="6NLQ">
    <property type="method" value="X-ray"/>
    <property type="resolution" value="1.15 A"/>
    <property type="chains" value="A/B/C/D=873-985"/>
</dbReference>
<dbReference type="PDB" id="6NLY">
    <property type="method" value="X-ray"/>
    <property type="resolution" value="2.31 A"/>
    <property type="chains" value="A/B/C/D=802-985"/>
</dbReference>
<dbReference type="PDB" id="6NOW">
    <property type="method" value="X-ray"/>
    <property type="resolution" value="4.10 A"/>
    <property type="chains" value="A/B=783-985"/>
</dbReference>
<dbReference type="PDBsum" id="6NLQ"/>
<dbReference type="PDBsum" id="6NLY"/>
<dbReference type="PDBsum" id="6NOW"/>
<dbReference type="SMR" id="Q5JTZ9"/>
<dbReference type="BioGRID" id="121569">
    <property type="interactions" value="340"/>
</dbReference>
<dbReference type="FunCoup" id="Q5JTZ9">
    <property type="interactions" value="1009"/>
</dbReference>
<dbReference type="IntAct" id="Q5JTZ9">
    <property type="interactions" value="64"/>
</dbReference>
<dbReference type="MINT" id="Q5JTZ9"/>
<dbReference type="STRING" id="9606.ENSP00000244571"/>
<dbReference type="DrugBank" id="DB00160">
    <property type="generic name" value="Alanine"/>
</dbReference>
<dbReference type="GlyGen" id="Q5JTZ9">
    <property type="glycosylation" value="2 sites, 1 O-linked glycan (1 site)"/>
</dbReference>
<dbReference type="iPTMnet" id="Q5JTZ9"/>
<dbReference type="PhosphoSitePlus" id="Q5JTZ9"/>
<dbReference type="SwissPalm" id="Q5JTZ9"/>
<dbReference type="BioMuta" id="AARS2"/>
<dbReference type="DMDM" id="74742244"/>
<dbReference type="jPOST" id="Q5JTZ9"/>
<dbReference type="MassIVE" id="Q5JTZ9"/>
<dbReference type="PaxDb" id="9606-ENSP00000244571"/>
<dbReference type="PeptideAtlas" id="Q5JTZ9"/>
<dbReference type="ProteomicsDB" id="63245"/>
<dbReference type="Pumba" id="Q5JTZ9"/>
<dbReference type="TopDownProteomics" id="Q5JTZ9"/>
<dbReference type="Antibodypedia" id="46060">
    <property type="antibodies" value="129 antibodies from 27 providers"/>
</dbReference>
<dbReference type="DNASU" id="57505"/>
<dbReference type="Ensembl" id="ENST00000244571.5">
    <property type="protein sequence ID" value="ENSP00000244571.4"/>
    <property type="gene ID" value="ENSG00000124608.5"/>
</dbReference>
<dbReference type="GeneID" id="57505"/>
<dbReference type="KEGG" id="hsa:57505"/>
<dbReference type="MANE-Select" id="ENST00000244571.5">
    <property type="protein sequence ID" value="ENSP00000244571.4"/>
    <property type="RefSeq nucleotide sequence ID" value="NM_020745.4"/>
    <property type="RefSeq protein sequence ID" value="NP_065796.2"/>
</dbReference>
<dbReference type="UCSC" id="uc010jza.2">
    <property type="organism name" value="human"/>
</dbReference>
<dbReference type="AGR" id="HGNC:21022"/>
<dbReference type="CTD" id="57505"/>
<dbReference type="DisGeNET" id="57505"/>
<dbReference type="GeneCards" id="AARS2"/>
<dbReference type="GeneReviews" id="AARS2"/>
<dbReference type="HGNC" id="HGNC:21022">
    <property type="gene designation" value="AARS2"/>
</dbReference>
<dbReference type="HPA" id="ENSG00000124608">
    <property type="expression patterns" value="Low tissue specificity"/>
</dbReference>
<dbReference type="MalaCards" id="AARS2"/>
<dbReference type="MIM" id="612035">
    <property type="type" value="gene"/>
</dbReference>
<dbReference type="MIM" id="614096">
    <property type="type" value="phenotype"/>
</dbReference>
<dbReference type="MIM" id="615889">
    <property type="type" value="phenotype"/>
</dbReference>
<dbReference type="neXtProt" id="NX_Q5JTZ9"/>
<dbReference type="OpenTargets" id="ENSG00000124608"/>
<dbReference type="Orphanet" id="313808">
    <property type="disease" value="Adult-onset leukoencephalopathy with axonal spheroids and pigmented glia"/>
</dbReference>
<dbReference type="Orphanet" id="319504">
    <property type="disease" value="Combined oxidative phosphorylation defect type 8"/>
</dbReference>
<dbReference type="Orphanet" id="99853">
    <property type="disease" value="Ovarioleukodystrophy"/>
</dbReference>
<dbReference type="PharmGKB" id="PA162375129"/>
<dbReference type="VEuPathDB" id="HostDB:ENSG00000124608"/>
<dbReference type="eggNOG" id="KOG0188">
    <property type="taxonomic scope" value="Eukaryota"/>
</dbReference>
<dbReference type="GeneTree" id="ENSGT00940000158246"/>
<dbReference type="HOGENOM" id="CLU_004485_5_0_1"/>
<dbReference type="InParanoid" id="Q5JTZ9"/>
<dbReference type="OMA" id="NCLEIWN"/>
<dbReference type="OrthoDB" id="2423964at2759"/>
<dbReference type="PAN-GO" id="Q5JTZ9">
    <property type="GO annotations" value="8 GO annotations based on evolutionary models"/>
</dbReference>
<dbReference type="PhylomeDB" id="Q5JTZ9"/>
<dbReference type="TreeFam" id="TF300737"/>
<dbReference type="BRENDA" id="6.1.1.7">
    <property type="organism ID" value="2681"/>
</dbReference>
<dbReference type="PathwayCommons" id="Q5JTZ9"/>
<dbReference type="Reactome" id="R-HSA-379726">
    <property type="pathway name" value="Mitochondrial tRNA aminoacylation"/>
</dbReference>
<dbReference type="SignaLink" id="Q5JTZ9"/>
<dbReference type="SIGNOR" id="Q5JTZ9"/>
<dbReference type="BioGRID-ORCS" id="57505">
    <property type="hits" value="430 hits in 1171 CRISPR screens"/>
</dbReference>
<dbReference type="CD-CODE" id="5965E019">
    <property type="entry name" value="mtRNA granule"/>
</dbReference>
<dbReference type="ChiTaRS" id="AARS2">
    <property type="organism name" value="human"/>
</dbReference>
<dbReference type="GeneWiki" id="AARS2"/>
<dbReference type="GenomeRNAi" id="57505"/>
<dbReference type="Pharos" id="Q5JTZ9">
    <property type="development level" value="Tbio"/>
</dbReference>
<dbReference type="PRO" id="PR:Q5JTZ9"/>
<dbReference type="Proteomes" id="UP000005640">
    <property type="component" value="Chromosome 6"/>
</dbReference>
<dbReference type="RNAct" id="Q5JTZ9">
    <property type="molecule type" value="protein"/>
</dbReference>
<dbReference type="Bgee" id="ENSG00000124608">
    <property type="expression patterns" value="Expressed in tendon of biceps brachii and 188 other cell types or tissues"/>
</dbReference>
<dbReference type="GO" id="GO:0005739">
    <property type="term" value="C:mitochondrion"/>
    <property type="evidence" value="ECO:0000314"/>
    <property type="project" value="UniProtKB"/>
</dbReference>
<dbReference type="GO" id="GO:0004813">
    <property type="term" value="F:alanine-tRNA ligase activity"/>
    <property type="evidence" value="ECO:0000315"/>
    <property type="project" value="BHF-UCL"/>
</dbReference>
<dbReference type="GO" id="GO:0002161">
    <property type="term" value="F:aminoacyl-tRNA deacylase activity"/>
    <property type="evidence" value="ECO:0000318"/>
    <property type="project" value="GO_Central"/>
</dbReference>
<dbReference type="GO" id="GO:0005524">
    <property type="term" value="F:ATP binding"/>
    <property type="evidence" value="ECO:0007669"/>
    <property type="project" value="UniProtKB-UniRule"/>
</dbReference>
<dbReference type="GO" id="GO:0141207">
    <property type="term" value="F:peptide lactyltransferase (ATP-dependent) activity"/>
    <property type="evidence" value="ECO:0000314"/>
    <property type="project" value="UniProtKB"/>
</dbReference>
<dbReference type="GO" id="GO:0000049">
    <property type="term" value="F:tRNA binding"/>
    <property type="evidence" value="ECO:0007669"/>
    <property type="project" value="UniProtKB-KW"/>
</dbReference>
<dbReference type="GO" id="GO:0008270">
    <property type="term" value="F:zinc ion binding"/>
    <property type="evidence" value="ECO:0007669"/>
    <property type="project" value="UniProtKB-UniRule"/>
</dbReference>
<dbReference type="GO" id="GO:0006419">
    <property type="term" value="P:alanyl-tRNA aminoacylation"/>
    <property type="evidence" value="ECO:0000318"/>
    <property type="project" value="GO_Central"/>
</dbReference>
<dbReference type="GO" id="GO:0070143">
    <property type="term" value="P:mitochondrial alanyl-tRNA aminoacylation"/>
    <property type="evidence" value="ECO:0000315"/>
    <property type="project" value="BHF-UCL"/>
</dbReference>
<dbReference type="GO" id="GO:0160049">
    <property type="term" value="P:negative regulation of cGAS/STING signaling pathway"/>
    <property type="evidence" value="ECO:0000314"/>
    <property type="project" value="UniProtKB"/>
</dbReference>
<dbReference type="CDD" id="cd00673">
    <property type="entry name" value="AlaRS_core"/>
    <property type="match status" value="1"/>
</dbReference>
<dbReference type="FunFam" id="3.30.930.10:FF:000011">
    <property type="entry name" value="Alanine--tRNA ligase, cytoplasmic"/>
    <property type="match status" value="1"/>
</dbReference>
<dbReference type="FunFam" id="3.30.980.10:FF:000004">
    <property type="entry name" value="Alanine--tRNA ligase, cytoplasmic"/>
    <property type="match status" value="1"/>
</dbReference>
<dbReference type="FunFam" id="2.40.30.130:FF:000005">
    <property type="entry name" value="Alanyl-tRNA synthetase 2, mitochondrial"/>
    <property type="match status" value="1"/>
</dbReference>
<dbReference type="FunFam" id="3.10.310.40:FF:000004">
    <property type="entry name" value="Alanyl-tRNA synthetase 2, mitochondrial"/>
    <property type="match status" value="1"/>
</dbReference>
<dbReference type="Gene3D" id="2.40.30.130">
    <property type="match status" value="1"/>
</dbReference>
<dbReference type="Gene3D" id="3.10.310.40">
    <property type="match status" value="1"/>
</dbReference>
<dbReference type="Gene3D" id="3.30.930.10">
    <property type="entry name" value="Bira Bifunctional Protein, Domain 2"/>
    <property type="match status" value="1"/>
</dbReference>
<dbReference type="Gene3D" id="3.30.980.10">
    <property type="entry name" value="Threonyl-trna Synthetase, Chain A, domain 2"/>
    <property type="match status" value="1"/>
</dbReference>
<dbReference type="HAMAP" id="MF_00036_B">
    <property type="entry name" value="Ala_tRNA_synth_B"/>
    <property type="match status" value="1"/>
</dbReference>
<dbReference type="InterPro" id="IPR045864">
    <property type="entry name" value="aa-tRNA-synth_II/BPL/LPL"/>
</dbReference>
<dbReference type="InterPro" id="IPR002318">
    <property type="entry name" value="Ala-tRNA-lgiase_IIc"/>
</dbReference>
<dbReference type="InterPro" id="IPR018162">
    <property type="entry name" value="Ala-tRNA-ligase_IIc_anticod-bd"/>
</dbReference>
<dbReference type="InterPro" id="IPR018165">
    <property type="entry name" value="Ala-tRNA-synth_IIc_core"/>
</dbReference>
<dbReference type="InterPro" id="IPR018164">
    <property type="entry name" value="Ala-tRNA-synth_IIc_N"/>
</dbReference>
<dbReference type="InterPro" id="IPR050058">
    <property type="entry name" value="Ala-tRNA_ligase"/>
</dbReference>
<dbReference type="InterPro" id="IPR023033">
    <property type="entry name" value="Ala_tRNA_ligase_euk/bac"/>
</dbReference>
<dbReference type="InterPro" id="IPR018163">
    <property type="entry name" value="Thr/Ala-tRNA-synth_IIc_edit"/>
</dbReference>
<dbReference type="InterPro" id="IPR009000">
    <property type="entry name" value="Transl_B-barrel_sf"/>
</dbReference>
<dbReference type="InterPro" id="IPR012947">
    <property type="entry name" value="tRNA_SAD"/>
</dbReference>
<dbReference type="NCBIfam" id="TIGR00344">
    <property type="entry name" value="alaS"/>
    <property type="match status" value="1"/>
</dbReference>
<dbReference type="PANTHER" id="PTHR11777:SF8">
    <property type="entry name" value="ALANINE--TRNA LIGASE, MITOCHONDRIAL"/>
    <property type="match status" value="1"/>
</dbReference>
<dbReference type="PANTHER" id="PTHR11777">
    <property type="entry name" value="ALANYL-TRNA SYNTHETASE"/>
    <property type="match status" value="1"/>
</dbReference>
<dbReference type="Pfam" id="PF01411">
    <property type="entry name" value="tRNA-synt_2c"/>
    <property type="match status" value="1"/>
</dbReference>
<dbReference type="Pfam" id="PF07973">
    <property type="entry name" value="tRNA_SAD"/>
    <property type="match status" value="1"/>
</dbReference>
<dbReference type="PRINTS" id="PR00980">
    <property type="entry name" value="TRNASYNTHALA"/>
</dbReference>
<dbReference type="SMART" id="SM00863">
    <property type="entry name" value="tRNA_SAD"/>
    <property type="match status" value="1"/>
</dbReference>
<dbReference type="SUPFAM" id="SSF55681">
    <property type="entry name" value="Class II aaRS and biotin synthetases"/>
    <property type="match status" value="1"/>
</dbReference>
<dbReference type="SUPFAM" id="SSF101353">
    <property type="entry name" value="Putative anticodon-binding domain of alanyl-tRNA synthetase (AlaRS)"/>
    <property type="match status" value="1"/>
</dbReference>
<dbReference type="SUPFAM" id="SSF55186">
    <property type="entry name" value="ThrRS/AlaRS common domain"/>
    <property type="match status" value="1"/>
</dbReference>
<dbReference type="SUPFAM" id="SSF50447">
    <property type="entry name" value="Translation proteins"/>
    <property type="match status" value="1"/>
</dbReference>
<dbReference type="PROSITE" id="PS50860">
    <property type="entry name" value="AA_TRNA_LIGASE_II_ALA"/>
    <property type="match status" value="1"/>
</dbReference>
<keyword id="KW-0002">3D-structure</keyword>
<keyword id="KW-0030">Aminoacyl-tRNA synthetase</keyword>
<keyword id="KW-0067">ATP-binding</keyword>
<keyword id="KW-0122">Cardiomyopathy</keyword>
<keyword id="KW-0225">Disease variant</keyword>
<keyword id="KW-0436">Ligase</keyword>
<keyword id="KW-0479">Metal-binding</keyword>
<keyword id="KW-0496">Mitochondrion</keyword>
<keyword id="KW-0523">Neurodegeneration</keyword>
<keyword id="KW-0547">Nucleotide-binding</keyword>
<keyword id="KW-1066">Premature ovarian failure</keyword>
<keyword id="KW-1274">Primary mitochondrial disease</keyword>
<keyword id="KW-0648">Protein biosynthesis</keyword>
<keyword id="KW-1267">Proteomics identification</keyword>
<keyword id="KW-1185">Reference proteome</keyword>
<keyword id="KW-0694">RNA-binding</keyword>
<keyword id="KW-0809">Transit peptide</keyword>
<keyword id="KW-0820">tRNA-binding</keyword>
<keyword id="KW-0862">Zinc</keyword>
<gene>
    <name evidence="2" type="primary">AARS2</name>
    <name type="synonym">AARSL</name>
    <name type="synonym">KIAA1270</name>
</gene>
<name>SYAM_HUMAN</name>
<comment type="function">
    <text evidence="5 8">Catalyzes the attachment of alanine to tRNA(Ala) in a two-step reaction: alanine is first activated by ATP to form Ala-AMP and then transferred to the acceptor end of tRNA(Ala). Also edits incorrectly charged tRNA(Ala) via its editing domain (PubMed:21549344). In presence of high levels of lactate, also acts as a protein lactyltransferase that mediates lactylation of lysine residues in target proteins, such as CGAS (PubMed:39322678). Acts as an inhibitor of cGAS/STING signaling by catalyzing lactylation of CGAS, preventing the formation of liquid-like droplets in which CGAS is activated (PubMed:39322678).</text>
</comment>
<comment type="catalytic activity">
    <reaction evidence="2 5">
        <text>tRNA(Ala) + L-alanine + ATP = L-alanyl-tRNA(Ala) + AMP + diphosphate</text>
        <dbReference type="Rhea" id="RHEA:12540"/>
        <dbReference type="Rhea" id="RHEA-COMP:9657"/>
        <dbReference type="Rhea" id="RHEA-COMP:9923"/>
        <dbReference type="ChEBI" id="CHEBI:30616"/>
        <dbReference type="ChEBI" id="CHEBI:33019"/>
        <dbReference type="ChEBI" id="CHEBI:57972"/>
        <dbReference type="ChEBI" id="CHEBI:78442"/>
        <dbReference type="ChEBI" id="CHEBI:78497"/>
        <dbReference type="ChEBI" id="CHEBI:456215"/>
        <dbReference type="EC" id="6.1.1.7"/>
    </reaction>
</comment>
<comment type="catalytic activity">
    <reaction evidence="8">
        <text>(S)-lactate + ATP + H(+) = (S)-lactoyl-AMP + diphosphate</text>
        <dbReference type="Rhea" id="RHEA:80271"/>
        <dbReference type="ChEBI" id="CHEBI:15378"/>
        <dbReference type="ChEBI" id="CHEBI:16651"/>
        <dbReference type="ChEBI" id="CHEBI:30616"/>
        <dbReference type="ChEBI" id="CHEBI:33019"/>
        <dbReference type="ChEBI" id="CHEBI:231470"/>
    </reaction>
    <physiologicalReaction direction="left-to-right" evidence="8">
        <dbReference type="Rhea" id="RHEA:80272"/>
    </physiologicalReaction>
</comment>
<comment type="catalytic activity">
    <reaction evidence="8">
        <text>(S)-lactoyl-AMP + L-lysyl-[protein] = N(6)-[(S)-lactoyl]-L-lysyl-[protein] + AMP + 2 H(+)</text>
        <dbReference type="Rhea" id="RHEA:80275"/>
        <dbReference type="Rhea" id="RHEA-COMP:9752"/>
        <dbReference type="Rhea" id="RHEA-COMP:19466"/>
        <dbReference type="ChEBI" id="CHEBI:15378"/>
        <dbReference type="ChEBI" id="CHEBI:29969"/>
        <dbReference type="ChEBI" id="CHEBI:231470"/>
        <dbReference type="ChEBI" id="CHEBI:231527"/>
        <dbReference type="ChEBI" id="CHEBI:456215"/>
    </reaction>
    <physiologicalReaction direction="left-to-right" evidence="8">
        <dbReference type="Rhea" id="RHEA:80276"/>
    </physiologicalReaction>
</comment>
<comment type="cofactor">
    <cofactor evidence="2">
        <name>Zn(2+)</name>
        <dbReference type="ChEBI" id="CHEBI:29105"/>
    </cofactor>
    <text evidence="2">Binds 1 zinc ion per subunit.</text>
</comment>
<comment type="subunit">
    <text evidence="2">Monomer.</text>
</comment>
<comment type="interaction">
    <interactant intactId="EBI-308736">
        <id>Q5JTZ9</id>
    </interactant>
    <interactant intactId="EBI-2339219">
        <id>Q08426</id>
        <label>EHHADH</label>
    </interactant>
    <organismsDiffer>false</organismsDiffer>
    <experiments>3</experiments>
</comment>
<comment type="interaction">
    <interactant intactId="EBI-308736">
        <id>Q5JTZ9</id>
    </interactant>
    <interactant intactId="EBI-12164121">
        <id>Q15257-2</id>
        <label>PTPA</label>
    </interactant>
    <organismsDiffer>false</organismsDiffer>
    <experiments>3</experiments>
</comment>
<comment type="subcellular location">
    <subcellularLocation>
        <location evidence="2 5">Mitochondrion</location>
    </subcellularLocation>
</comment>
<comment type="domain">
    <text evidence="2">Consists of three domains; the N-terminal catalytic domain, the editing domain and the C-terminal C-Ala domain. The editing domain removes incorrectly charged amino acids, while the C-Ala domain, along with tRNA(Ala), serves as a bridge to cooperatively bring together the editing and aminoacylation centers thus stimulating deacylation of misacylated tRNAs.</text>
</comment>
<comment type="disease" evidence="5">
    <disease id="DI-03184">
        <name>Combined oxidative phosphorylation deficiency 8</name>
        <acronym>COXPD8</acronym>
        <description>A mitochondrial disease characterized by a lethal infantile hypertrophic cardiomyopathy, generalized muscle dysfunction and some neurologic involvement. The liver is not affected.</description>
        <dbReference type="MIM" id="614096"/>
    </disease>
    <text>The disease is caused by variants affecting the gene represented in this entry.</text>
</comment>
<comment type="disease" evidence="6">
    <disease id="DI-04191">
        <name>Leukoencephalopathy, progressive, with ovarian failure</name>
        <acronym>LKENP</acronym>
        <description>An autosomal recessive neurodegenerative disorder characterized by childhood- to adulthood-onset of signs of neurologic deterioration consisting of ataxia, spasticity, and cognitive decline with features of frontal lobe dysfunction. Brain MRI shows leukoencephalopathy with striking involvement of deep white matter, and cerebellar atrophy. All female patients develop premature ovarian failure.</description>
        <dbReference type="MIM" id="615889"/>
    </disease>
    <text>The disease is caused by variants affecting the gene represented in this entry.</text>
</comment>
<comment type="similarity">
    <text evidence="2">Belongs to the class-II aminoacyl-tRNA synthetase family.</text>
</comment>
<comment type="caution">
    <text evidence="8">Given that AARS2 is a mitochondrial protein, it is unclear how it can mediate lactylation of CGAS, which localizes in the cytosol and nucleus.</text>
</comment>
<comment type="sequence caution" evidence="9">
    <conflict type="erroneous initiation">
        <sequence resource="EMBL-CDS" id="BAA86584"/>
    </conflict>
    <text>Extended N-terminus.</text>
</comment>
<accession>Q5JTZ9</accession>
<accession>A2RRN5</accession>
<accession>Q8N198</accession>
<accession>Q96D02</accession>
<accession>Q9ULF0</accession>
<organism>
    <name type="scientific">Homo sapiens</name>
    <name type="common">Human</name>
    <dbReference type="NCBI Taxonomy" id="9606"/>
    <lineage>
        <taxon>Eukaryota</taxon>
        <taxon>Metazoa</taxon>
        <taxon>Chordata</taxon>
        <taxon>Craniata</taxon>
        <taxon>Vertebrata</taxon>
        <taxon>Euteleostomi</taxon>
        <taxon>Mammalia</taxon>
        <taxon>Eutheria</taxon>
        <taxon>Euarchontoglires</taxon>
        <taxon>Primates</taxon>
        <taxon>Haplorrhini</taxon>
        <taxon>Catarrhini</taxon>
        <taxon>Hominidae</taxon>
        <taxon>Homo</taxon>
    </lineage>
</organism>
<evidence type="ECO:0000250" key="1">
    <source>
        <dbReference type="UniProtKB" id="P49588"/>
    </source>
</evidence>
<evidence type="ECO:0000255" key="2">
    <source>
        <dbReference type="HAMAP-Rule" id="MF_03133"/>
    </source>
</evidence>
<evidence type="ECO:0000269" key="3">
    <source>
    </source>
</evidence>
<evidence type="ECO:0000269" key="4">
    <source>
    </source>
</evidence>
<evidence type="ECO:0000269" key="5">
    <source>
    </source>
</evidence>
<evidence type="ECO:0000269" key="6">
    <source>
    </source>
</evidence>
<evidence type="ECO:0000269" key="7">
    <source>
    </source>
</evidence>
<evidence type="ECO:0000269" key="8">
    <source>
    </source>
</evidence>
<evidence type="ECO:0000305" key="9"/>
<evidence type="ECO:0007829" key="10">
    <source>
        <dbReference type="PDB" id="6NLQ"/>
    </source>
</evidence>
<evidence type="ECO:0007829" key="11">
    <source>
        <dbReference type="PDB" id="6NLY"/>
    </source>
</evidence>
<feature type="transit peptide" description="Mitochondrion" evidence="2">
    <location>
        <begin position="1"/>
        <end position="23"/>
    </location>
</feature>
<feature type="chain" id="PRO_0000250725" description="Alanine--tRNA ligase, mitochondrial">
    <location>
        <begin position="24"/>
        <end position="985"/>
    </location>
</feature>
<feature type="binding site" evidence="1">
    <location>
        <position position="110"/>
    </location>
    <ligand>
        <name>ATP</name>
        <dbReference type="ChEBI" id="CHEBI:30616"/>
    </ligand>
</feature>
<feature type="binding site" evidence="1">
    <location>
        <position position="128"/>
    </location>
    <ligand>
        <name>ATP</name>
        <dbReference type="ChEBI" id="CHEBI:30616"/>
    </ligand>
</feature>
<feature type="binding site" evidence="1">
    <location>
        <position position="210"/>
    </location>
    <ligand>
        <name>ATP</name>
        <dbReference type="ChEBI" id="CHEBI:30616"/>
    </ligand>
</feature>
<feature type="binding site" evidence="1">
    <location>
        <begin position="240"/>
        <end position="242"/>
    </location>
    <ligand>
        <name>ATP</name>
        <dbReference type="ChEBI" id="CHEBI:30616"/>
    </ligand>
</feature>
<feature type="binding site" evidence="1">
    <location>
        <position position="242"/>
    </location>
    <ligand>
        <name>L-alanine</name>
        <dbReference type="ChEBI" id="CHEBI:57972"/>
    </ligand>
</feature>
<feature type="binding site" evidence="1">
    <location>
        <position position="265"/>
    </location>
    <ligand>
        <name>L-alanine</name>
        <dbReference type="ChEBI" id="CHEBI:57972"/>
    </ligand>
</feature>
<feature type="binding site" evidence="1">
    <location>
        <position position="269"/>
    </location>
    <ligand>
        <name>ATP</name>
        <dbReference type="ChEBI" id="CHEBI:30616"/>
    </ligand>
</feature>
<feature type="binding site" evidence="2">
    <location>
        <position position="632"/>
    </location>
    <ligand>
        <name>Zn(2+)</name>
        <dbReference type="ChEBI" id="CHEBI:29105"/>
    </ligand>
</feature>
<feature type="binding site" evidence="2">
    <location>
        <position position="636"/>
    </location>
    <ligand>
        <name>Zn(2+)</name>
        <dbReference type="ChEBI" id="CHEBI:29105"/>
    </ligand>
</feature>
<feature type="binding site" evidence="2">
    <location>
        <position position="749"/>
    </location>
    <ligand>
        <name>Zn(2+)</name>
        <dbReference type="ChEBI" id="CHEBI:29105"/>
    </ligand>
</feature>
<feature type="binding site" evidence="2">
    <location>
        <position position="753"/>
    </location>
    <ligand>
        <name>Zn(2+)</name>
        <dbReference type="ChEBI" id="CHEBI:29105"/>
    </ligand>
</feature>
<feature type="sequence variant" id="VAR_071837" description="In LKENP; deleterious only under stress conditions; dbSNP:rs587777590." evidence="6">
    <original>F</original>
    <variation>C</variation>
    <location>
        <position position="50"/>
    </location>
</feature>
<feature type="sequence variant" id="VAR_071838" description="Found in patient with leukoencephalopathy; uncertain significance; dbSNP:rs375949891." evidence="6">
    <original>A</original>
    <variation>V</variation>
    <location>
        <position position="77"/>
    </location>
</feature>
<feature type="sequence variant" id="VAR_088475" description="Found in a patient with an aminoacyl-tRNA synthetase abnormality; uncertain significance." evidence="7">
    <original>Q</original>
    <variation>H</variation>
    <location>
        <position position="106"/>
    </location>
</feature>
<feature type="sequence variant" id="VAR_071839" description="Found in patient with leukoencephalopathy; uncertain significance." evidence="6">
    <location>
        <position position="131"/>
    </location>
</feature>
<feature type="sequence variant" id="VAR_065956" description="In COXPD8; dbSNP:rs387907061." evidence="5">
    <original>L</original>
    <variation>R</variation>
    <location>
        <position position="155"/>
    </location>
</feature>
<feature type="sequence variant" id="VAR_071840" description="Found in patient with leukoencephalopathy; uncertain significance; dbSNP:rs200105202." evidence="6">
    <original>R</original>
    <variation>C</variation>
    <location>
        <position position="199"/>
    </location>
</feature>
<feature type="sequence variant" id="VAR_088476" description="Found in a patient with an aminoacyl-tRNA synthetase abnormality; uncertain significance; dbSNP:rs1266991544." evidence="7">
    <original>M</original>
    <variation>I</variation>
    <location>
        <position position="268"/>
    </location>
</feature>
<feature type="sequence variant" id="VAR_027609" description="In dbSNP:rs324136." evidence="3 4">
    <original>I</original>
    <variation>V</variation>
    <location>
        <position position="339"/>
    </location>
</feature>
<feature type="sequence variant" id="VAR_071841" description="In LKENP; dbSNP:rs587777592." evidence="6">
    <original>E</original>
    <variation>K</variation>
    <location>
        <position position="405"/>
    </location>
</feature>
<feature type="sequence variant" id="VAR_027610" description="In dbSNP:rs495294.">
    <original>A</original>
    <variation>D</variation>
    <location>
        <position position="484"/>
    </location>
</feature>
<feature type="sequence variant" id="VAR_065957" description="In COXPD8; dbSNP:rs138119149." evidence="5">
    <original>R</original>
    <variation>W</variation>
    <location>
        <position position="592"/>
    </location>
</feature>
<feature type="sequence variant" id="VAR_071842" description="In dbSNP:rs35623954." evidence="6">
    <original>V</original>
    <variation>M</variation>
    <location>
        <position position="730"/>
    </location>
</feature>
<feature type="sequence variant" id="VAR_057357" description="In dbSNP:rs35783144.">
    <original>M</original>
    <variation>V</variation>
    <location>
        <position position="850"/>
    </location>
</feature>
<feature type="sequence variant" id="VAR_071843" description="In LKENP; dbSNP:rs543267101." evidence="6">
    <original>G</original>
    <variation>R</variation>
    <location>
        <position position="965"/>
    </location>
</feature>
<feature type="mutagenesis site" description="In mutant 5A; abolished binding to lactate and protein lactylation; when associated with A-110, A-242 and 265-A--A-267." evidence="8">
    <original>M</original>
    <variation>A</variation>
    <location>
        <position position="79"/>
    </location>
</feature>
<feature type="mutagenesis site" description="In mutant 5A; abolished binding to lactate and protein lactylation; when associated with A-79, A-242 and 265-A--A-267. In ATP-binding mutant; abolished ability to mediate protein lactylation; when associated with A-210 and A-269." evidence="8">
    <original>R</original>
    <variation>A</variation>
    <location>
        <position position="110"/>
    </location>
</feature>
<feature type="mutagenesis site" description="In ATP-binding mutant; abolished ability to mediate protein lactylation; when associated with A-110 and A-269." evidence="8">
    <original>W</original>
    <variation>A</variation>
    <location>
        <position position="210"/>
    </location>
</feature>
<feature type="mutagenesis site" description="In mutant 5A; abolished binding to lactate and protein lactylation; when associated with A-79, A-110 and 265-A--A-267." evidence="8">
    <original>N</original>
    <variation>A</variation>
    <location>
        <position position="242"/>
    </location>
</feature>
<feature type="mutagenesis site" description="In mutant 5A; abolished binding to lactate and protein lactylation; when associated with A-79, A-110 and A-242." evidence="8">
    <original>DTG</original>
    <variation>ATA</variation>
    <location>
        <begin position="265"/>
        <end position="267"/>
    </location>
</feature>
<feature type="mutagenesis site" description="In ATP-binding mutant; abolished ability to mediate protein lactylation; when associated with A-110 and A-210." evidence="8">
    <original>G</original>
    <variation>A</variation>
    <location>
        <position position="269"/>
    </location>
</feature>
<feature type="helix" evidence="11">
    <location>
        <begin position="812"/>
        <end position="832"/>
    </location>
</feature>
<feature type="helix" evidence="11">
    <location>
        <begin position="838"/>
        <end position="877"/>
    </location>
</feature>
<feature type="strand" evidence="10">
    <location>
        <begin position="883"/>
        <end position="887"/>
    </location>
</feature>
<feature type="helix" evidence="10">
    <location>
        <begin position="893"/>
        <end position="906"/>
    </location>
</feature>
<feature type="strand" evidence="10">
    <location>
        <begin position="911"/>
        <end position="917"/>
    </location>
</feature>
<feature type="helix" evidence="10">
    <location>
        <begin position="919"/>
        <end position="921"/>
    </location>
</feature>
<feature type="strand" evidence="10">
    <location>
        <begin position="922"/>
        <end position="928"/>
    </location>
</feature>
<feature type="helix" evidence="10">
    <location>
        <begin position="939"/>
        <end position="949"/>
    </location>
</feature>
<feature type="strand" evidence="10">
    <location>
        <begin position="953"/>
        <end position="956"/>
    </location>
</feature>
<feature type="strand" evidence="10">
    <location>
        <begin position="958"/>
        <end position="966"/>
    </location>
</feature>
<feature type="helix" evidence="10">
    <location>
        <begin position="970"/>
        <end position="984"/>
    </location>
</feature>
<reference key="1">
    <citation type="journal article" date="1999" name="DNA Res.">
        <title>Prediction of the coding sequences of unidentified human genes. XV. The complete sequences of 100 new cDNA clones from brain which code for large proteins in vitro.</title>
        <authorList>
            <person name="Nagase T."/>
            <person name="Ishikawa K."/>
            <person name="Kikuno R."/>
            <person name="Hirosawa M."/>
            <person name="Nomura N."/>
            <person name="Ohara O."/>
        </authorList>
    </citation>
    <scope>NUCLEOTIDE SEQUENCE [LARGE SCALE MRNA]</scope>
    <scope>VARIANT VAL-339</scope>
    <source>
        <tissue>Brain</tissue>
    </source>
</reference>
<reference key="2">
    <citation type="journal article" date="2003" name="Nature">
        <title>The DNA sequence and analysis of human chromosome 6.</title>
        <authorList>
            <person name="Mungall A.J."/>
            <person name="Palmer S.A."/>
            <person name="Sims S.K."/>
            <person name="Edwards C.A."/>
            <person name="Ashurst J.L."/>
            <person name="Wilming L."/>
            <person name="Jones M.C."/>
            <person name="Horton R."/>
            <person name="Hunt S.E."/>
            <person name="Scott C.E."/>
            <person name="Gilbert J.G.R."/>
            <person name="Clamp M.E."/>
            <person name="Bethel G."/>
            <person name="Milne S."/>
            <person name="Ainscough R."/>
            <person name="Almeida J.P."/>
            <person name="Ambrose K.D."/>
            <person name="Andrews T.D."/>
            <person name="Ashwell R.I.S."/>
            <person name="Babbage A.K."/>
            <person name="Bagguley C.L."/>
            <person name="Bailey J."/>
            <person name="Banerjee R."/>
            <person name="Barker D.J."/>
            <person name="Barlow K.F."/>
            <person name="Bates K."/>
            <person name="Beare D.M."/>
            <person name="Beasley H."/>
            <person name="Beasley O."/>
            <person name="Bird C.P."/>
            <person name="Blakey S.E."/>
            <person name="Bray-Allen S."/>
            <person name="Brook J."/>
            <person name="Brown A.J."/>
            <person name="Brown J.Y."/>
            <person name="Burford D.C."/>
            <person name="Burrill W."/>
            <person name="Burton J."/>
            <person name="Carder C."/>
            <person name="Carter N.P."/>
            <person name="Chapman J.C."/>
            <person name="Clark S.Y."/>
            <person name="Clark G."/>
            <person name="Clee C.M."/>
            <person name="Clegg S."/>
            <person name="Cobley V."/>
            <person name="Collier R.E."/>
            <person name="Collins J.E."/>
            <person name="Colman L.K."/>
            <person name="Corby N.R."/>
            <person name="Coville G.J."/>
            <person name="Culley K.M."/>
            <person name="Dhami P."/>
            <person name="Davies J."/>
            <person name="Dunn M."/>
            <person name="Earthrowl M.E."/>
            <person name="Ellington A.E."/>
            <person name="Evans K.A."/>
            <person name="Faulkner L."/>
            <person name="Francis M.D."/>
            <person name="Frankish A."/>
            <person name="Frankland J."/>
            <person name="French L."/>
            <person name="Garner P."/>
            <person name="Garnett J."/>
            <person name="Ghori M.J."/>
            <person name="Gilby L.M."/>
            <person name="Gillson C.J."/>
            <person name="Glithero R.J."/>
            <person name="Grafham D.V."/>
            <person name="Grant M."/>
            <person name="Gribble S."/>
            <person name="Griffiths C."/>
            <person name="Griffiths M.N.D."/>
            <person name="Hall R."/>
            <person name="Halls K.S."/>
            <person name="Hammond S."/>
            <person name="Harley J.L."/>
            <person name="Hart E.A."/>
            <person name="Heath P.D."/>
            <person name="Heathcott R."/>
            <person name="Holmes S.J."/>
            <person name="Howden P.J."/>
            <person name="Howe K.L."/>
            <person name="Howell G.R."/>
            <person name="Huckle E."/>
            <person name="Humphray S.J."/>
            <person name="Humphries M.D."/>
            <person name="Hunt A.R."/>
            <person name="Johnson C.M."/>
            <person name="Joy A.A."/>
            <person name="Kay M."/>
            <person name="Keenan S.J."/>
            <person name="Kimberley A.M."/>
            <person name="King A."/>
            <person name="Laird G.K."/>
            <person name="Langford C."/>
            <person name="Lawlor S."/>
            <person name="Leongamornlert D.A."/>
            <person name="Leversha M."/>
            <person name="Lloyd C.R."/>
            <person name="Lloyd D.M."/>
            <person name="Loveland J.E."/>
            <person name="Lovell J."/>
            <person name="Martin S."/>
            <person name="Mashreghi-Mohammadi M."/>
            <person name="Maslen G.L."/>
            <person name="Matthews L."/>
            <person name="McCann O.T."/>
            <person name="McLaren S.J."/>
            <person name="McLay K."/>
            <person name="McMurray A."/>
            <person name="Moore M.J.F."/>
            <person name="Mullikin J.C."/>
            <person name="Niblett D."/>
            <person name="Nickerson T."/>
            <person name="Novik K.L."/>
            <person name="Oliver K."/>
            <person name="Overton-Larty E.K."/>
            <person name="Parker A."/>
            <person name="Patel R."/>
            <person name="Pearce A.V."/>
            <person name="Peck A.I."/>
            <person name="Phillimore B.J.C.T."/>
            <person name="Phillips S."/>
            <person name="Plumb R.W."/>
            <person name="Porter K.M."/>
            <person name="Ramsey Y."/>
            <person name="Ranby S.A."/>
            <person name="Rice C.M."/>
            <person name="Ross M.T."/>
            <person name="Searle S.M."/>
            <person name="Sehra H.K."/>
            <person name="Sheridan E."/>
            <person name="Skuce C.D."/>
            <person name="Smith S."/>
            <person name="Smith M."/>
            <person name="Spraggon L."/>
            <person name="Squares S.L."/>
            <person name="Steward C.A."/>
            <person name="Sycamore N."/>
            <person name="Tamlyn-Hall G."/>
            <person name="Tester J."/>
            <person name="Theaker A.J."/>
            <person name="Thomas D.W."/>
            <person name="Thorpe A."/>
            <person name="Tracey A."/>
            <person name="Tromans A."/>
            <person name="Tubby B."/>
            <person name="Wall M."/>
            <person name="Wallis J.M."/>
            <person name="West A.P."/>
            <person name="White S.S."/>
            <person name="Whitehead S.L."/>
            <person name="Whittaker H."/>
            <person name="Wild A."/>
            <person name="Willey D.J."/>
            <person name="Wilmer T.E."/>
            <person name="Wood J.M."/>
            <person name="Wray P.W."/>
            <person name="Wyatt J.C."/>
            <person name="Young L."/>
            <person name="Younger R.M."/>
            <person name="Bentley D.R."/>
            <person name="Coulson A."/>
            <person name="Durbin R.M."/>
            <person name="Hubbard T."/>
            <person name="Sulston J.E."/>
            <person name="Dunham I."/>
            <person name="Rogers J."/>
            <person name="Beck S."/>
        </authorList>
    </citation>
    <scope>NUCLEOTIDE SEQUENCE [LARGE SCALE GENOMIC DNA]</scope>
</reference>
<reference key="3">
    <citation type="journal article" date="2004" name="Genome Res.">
        <title>The status, quality, and expansion of the NIH full-length cDNA project: the Mammalian Gene Collection (MGC).</title>
        <authorList>
            <consortium name="The MGC Project Team"/>
        </authorList>
    </citation>
    <scope>NUCLEOTIDE SEQUENCE [LARGE SCALE MRNA]</scope>
    <scope>VARIANT VAL-339</scope>
    <source>
        <tissue>Lung</tissue>
    </source>
</reference>
<reference key="4">
    <citation type="journal article" date="2005" name="Biochemistry">
        <title>Toward the full set of human mitochondrial aminoacyl-tRNA synthetases: characterization of AspRS and TyrRS.</title>
        <authorList>
            <person name="Bonnefond L."/>
            <person name="Fender A."/>
            <person name="Rudinger-Thirion J."/>
            <person name="Giege R."/>
            <person name="Florentz C."/>
            <person name="Sissler M."/>
        </authorList>
    </citation>
    <scope>IDENTIFICATION</scope>
</reference>
<reference key="5">
    <citation type="journal article" date="2011" name="Am. J. Hum. Genet.">
        <title>Exome sequencing identifies mitochondrial alanyl-tRNA synthetase mutations in infantile mitochondrial cardiomyopathy.</title>
        <authorList>
            <person name="Gotz A."/>
            <person name="Tyynismaa H."/>
            <person name="Euro L."/>
            <person name="Ellonen P."/>
            <person name="Hyotylainen T."/>
            <person name="Ojala T."/>
            <person name="Hamalainen R.H."/>
            <person name="Tommiska J."/>
            <person name="Raivio T."/>
            <person name="Oresic M."/>
            <person name="Karikoski R."/>
            <person name="Tammela O."/>
            <person name="Simola K.O."/>
            <person name="Paetau A."/>
            <person name="Tyni T."/>
            <person name="Suomalainen A."/>
        </authorList>
    </citation>
    <scope>FUNCTION</scope>
    <scope>SUBCELLULAR LOCATION</scope>
    <scope>VARIANTS COXPD8 ARG-155 AND TRP-592</scope>
</reference>
<reference key="6">
    <citation type="journal article" date="2011" name="BMC Syst. Biol.">
        <title>Initial characterization of the human central proteome.</title>
        <authorList>
            <person name="Burkard T.R."/>
            <person name="Planyavsky M."/>
            <person name="Kaupe I."/>
            <person name="Breitwieser F.P."/>
            <person name="Buerckstuemmer T."/>
            <person name="Bennett K.L."/>
            <person name="Superti-Furga G."/>
            <person name="Colinge J."/>
        </authorList>
    </citation>
    <scope>IDENTIFICATION BY MASS SPECTROMETRY [LARGE SCALE ANALYSIS]</scope>
</reference>
<reference key="7">
    <citation type="journal article" date="2014" name="J. Proteomics">
        <title>An enzyme assisted RP-RPLC approach for in-depth analysis of human liver phosphoproteome.</title>
        <authorList>
            <person name="Bian Y."/>
            <person name="Song C."/>
            <person name="Cheng K."/>
            <person name="Dong M."/>
            <person name="Wang F."/>
            <person name="Huang J."/>
            <person name="Sun D."/>
            <person name="Wang L."/>
            <person name="Ye M."/>
            <person name="Zou H."/>
        </authorList>
    </citation>
    <scope>IDENTIFICATION BY MASS SPECTROMETRY [LARGE SCALE ANALYSIS]</scope>
    <source>
        <tissue>Liver</tissue>
    </source>
</reference>
<reference key="8">
    <citation type="journal article" date="2014" name="Neurology">
        <title>Novel (ovario) leukodystrophy related to AARS2 mutations.</title>
        <authorList>
            <person name="Dallabona C."/>
            <person name="Diodato D."/>
            <person name="Kevelam S.H."/>
            <person name="Haack T.B."/>
            <person name="Wong L.J."/>
            <person name="Salomons G.S."/>
            <person name="Baruffini E."/>
            <person name="Melchionda L."/>
            <person name="Mariotti C."/>
            <person name="Strom T.M."/>
            <person name="Meitinger T."/>
            <person name="Prokisch H."/>
            <person name="Chapman K."/>
            <person name="Colley A."/>
            <person name="Rocha H."/>
            <person name="Ounap K."/>
            <person name="Schiffmann R."/>
            <person name="Salsano E."/>
            <person name="Savoiardo M."/>
            <person name="Hamilton E.M."/>
            <person name="Abbink T.E."/>
            <person name="Wolf N.I."/>
            <person name="Ferrero I."/>
            <person name="Lamperti C."/>
            <person name="Zeviani M."/>
            <person name="Vanderver A."/>
            <person name="Ghezzi D."/>
            <person name="van der Knaap M.S."/>
        </authorList>
    </citation>
    <scope>INVOLVEMENT IN LKENP</scope>
    <scope>VARIANTS LKENP CYS-50; LYS-405 AND ARG-965</scope>
    <scope>VARIANTS VAL-77; PHE-131 DEL; CYS-199 AND MET-730</scope>
    <scope>CHARACTERIZATION OF VARIANT LKENP CYS-50</scope>
</reference>
<reference key="9">
    <citation type="journal article" date="2015" name="Proteomics">
        <title>N-terminome analysis of the human mitochondrial proteome.</title>
        <authorList>
            <person name="Vaca Jacome A.S."/>
            <person name="Rabilloud T."/>
            <person name="Schaeffer-Reiss C."/>
            <person name="Rompais M."/>
            <person name="Ayoub D."/>
            <person name="Lane L."/>
            <person name="Bairoch A."/>
            <person name="Van Dorsselaer A."/>
            <person name="Carapito C."/>
        </authorList>
    </citation>
    <scope>IDENTIFICATION BY MASS SPECTROMETRY [LARGE SCALE ANALYSIS]</scope>
</reference>
<reference key="10">
    <citation type="journal article" date="2024" name="Nature">
        <title>AARS1 and AARS2 sense L-lactate to regulate cGAS as global lysine lactyltransferases.</title>
        <authorList>
            <person name="Li H."/>
            <person name="Liu C."/>
            <person name="Li R."/>
            <person name="Zhou L."/>
            <person name="Ran Y."/>
            <person name="Yang Q."/>
            <person name="Huang H."/>
            <person name="Lu H."/>
            <person name="Song H."/>
            <person name="Yang B."/>
            <person name="Ru H."/>
            <person name="Lin S."/>
            <person name="Zhang L."/>
        </authorList>
    </citation>
    <scope>FUNCTION</scope>
    <scope>CATALYTIC ACTIVITY</scope>
    <scope>MUTAGENESIS OF MET-79; ARG-110; TRP-210; ASN-242; 265-ASP--GLY-267 AND GLY-269</scope>
</reference>
<reference key="11">
    <citation type="journal article" date="2022" name="Neurol. Sci.">
        <title>Four pedigrees with aminoacyl-tRNA synthetase abnormalities.</title>
        <authorList>
            <person name="Okamoto N."/>
            <person name="Miya F."/>
            <person name="Tsunoda T."/>
            <person name="Kanemura Y."/>
            <person name="Saitoh S."/>
            <person name="Kato M."/>
            <person name="Yanagi K."/>
            <person name="Kaname T."/>
            <person name="Kosaki K."/>
        </authorList>
    </citation>
    <scope>VARIANTS HIS-106 AND ILE-268</scope>
</reference>